<feature type="chain" id="PRO_1000135640" description="DNA replication terminus site-binding protein">
    <location>
        <begin position="1"/>
        <end position="309"/>
    </location>
</feature>
<reference key="1">
    <citation type="journal article" date="2009" name="PLoS Genet.">
        <title>Organised genome dynamics in the Escherichia coli species results in highly diverse adaptive paths.</title>
        <authorList>
            <person name="Touchon M."/>
            <person name="Hoede C."/>
            <person name="Tenaillon O."/>
            <person name="Barbe V."/>
            <person name="Baeriswyl S."/>
            <person name="Bidet P."/>
            <person name="Bingen E."/>
            <person name="Bonacorsi S."/>
            <person name="Bouchier C."/>
            <person name="Bouvet O."/>
            <person name="Calteau A."/>
            <person name="Chiapello H."/>
            <person name="Clermont O."/>
            <person name="Cruveiller S."/>
            <person name="Danchin A."/>
            <person name="Diard M."/>
            <person name="Dossat C."/>
            <person name="Karoui M.E."/>
            <person name="Frapy E."/>
            <person name="Garry L."/>
            <person name="Ghigo J.M."/>
            <person name="Gilles A.M."/>
            <person name="Johnson J."/>
            <person name="Le Bouguenec C."/>
            <person name="Lescat M."/>
            <person name="Mangenot S."/>
            <person name="Martinez-Jehanne V."/>
            <person name="Matic I."/>
            <person name="Nassif X."/>
            <person name="Oztas S."/>
            <person name="Petit M.A."/>
            <person name="Pichon C."/>
            <person name="Rouy Z."/>
            <person name="Ruf C.S."/>
            <person name="Schneider D."/>
            <person name="Tourret J."/>
            <person name="Vacherie B."/>
            <person name="Vallenet D."/>
            <person name="Medigue C."/>
            <person name="Rocha E.P.C."/>
            <person name="Denamur E."/>
        </authorList>
    </citation>
    <scope>NUCLEOTIDE SEQUENCE [LARGE SCALE GENOMIC DNA]</scope>
    <source>
        <strain>ED1a</strain>
    </source>
</reference>
<accession>B7MV86</accession>
<organism>
    <name type="scientific">Escherichia coli O81 (strain ED1a)</name>
    <dbReference type="NCBI Taxonomy" id="585397"/>
    <lineage>
        <taxon>Bacteria</taxon>
        <taxon>Pseudomonadati</taxon>
        <taxon>Pseudomonadota</taxon>
        <taxon>Gammaproteobacteria</taxon>
        <taxon>Enterobacterales</taxon>
        <taxon>Enterobacteriaceae</taxon>
        <taxon>Escherichia</taxon>
    </lineage>
</organism>
<evidence type="ECO:0000255" key="1">
    <source>
        <dbReference type="HAMAP-Rule" id="MF_00483"/>
    </source>
</evidence>
<sequence length="309" mass="35709">MARYDLVDRLNTTFRQMEQELAAFAAELEQHKLLVARVFSLPEVKKEDEHNPLNRIEVKQHLGNDAQSLALRHFRHLFIQQQSENRSSKAAVRLPGVLCYQVDNFSQAALVSHIQHINKLKTTFEHIVTVESELPSAARFEWVHRHLPGLITLNAYRTLTVLHAPATLRFGWANKHIIKNLHRDEVLAQLEKSLKSPRSVAPWTREEWQRKLEREYQDIAALPQNAKLKIKRPVKVQPIARVWYKGDQKQVQHACPTPLIALINRDNGAGVPDVGELLNYDADNVQHRYKPQAQPLRLIIPRLHLYVAD</sequence>
<keyword id="KW-0963">Cytoplasm</keyword>
<keyword id="KW-0235">DNA replication</keyword>
<keyword id="KW-0238">DNA-binding</keyword>
<dbReference type="EMBL" id="CU928162">
    <property type="protein sequence ID" value="CAR08002.2"/>
    <property type="molecule type" value="Genomic_DNA"/>
</dbReference>
<dbReference type="RefSeq" id="WP_012601539.1">
    <property type="nucleotide sequence ID" value="NC_011745.1"/>
</dbReference>
<dbReference type="SMR" id="B7MV86"/>
<dbReference type="KEGG" id="ecq:ECED1_1809"/>
<dbReference type="HOGENOM" id="CLU_078181_0_0_6"/>
<dbReference type="Proteomes" id="UP000000748">
    <property type="component" value="Chromosome"/>
</dbReference>
<dbReference type="GO" id="GO:0005737">
    <property type="term" value="C:cytoplasm"/>
    <property type="evidence" value="ECO:0007669"/>
    <property type="project" value="UniProtKB-SubCell"/>
</dbReference>
<dbReference type="GO" id="GO:0003677">
    <property type="term" value="F:DNA binding"/>
    <property type="evidence" value="ECO:0007669"/>
    <property type="project" value="UniProtKB-UniRule"/>
</dbReference>
<dbReference type="GO" id="GO:0006274">
    <property type="term" value="P:DNA replication termination"/>
    <property type="evidence" value="ECO:0007669"/>
    <property type="project" value="UniProtKB-UniRule"/>
</dbReference>
<dbReference type="Gene3D" id="3.30.54.10">
    <property type="match status" value="1"/>
</dbReference>
<dbReference type="Gene3D" id="3.50.14.10">
    <property type="entry name" value="Replication terminator Tus, domain 1 superfamily/Replication terminator Tus"/>
    <property type="match status" value="1"/>
</dbReference>
<dbReference type="HAMAP" id="MF_00483">
    <property type="entry name" value="Rep_term_Tus"/>
    <property type="match status" value="1"/>
</dbReference>
<dbReference type="InterPro" id="IPR008865">
    <property type="entry name" value="DNA_replication_term_site-bd"/>
</dbReference>
<dbReference type="InterPro" id="IPR036381">
    <property type="entry name" value="Tus_dom1"/>
</dbReference>
<dbReference type="InterPro" id="IPR036384">
    <property type="entry name" value="Tus_sf"/>
</dbReference>
<dbReference type="NCBIfam" id="TIGR02648">
    <property type="entry name" value="rep_term_tus"/>
    <property type="match status" value="1"/>
</dbReference>
<dbReference type="Pfam" id="PF05472">
    <property type="entry name" value="Ter"/>
    <property type="match status" value="1"/>
</dbReference>
<dbReference type="SUPFAM" id="SSF56596">
    <property type="entry name" value="Replication terminator protein (Tus)"/>
    <property type="match status" value="1"/>
</dbReference>
<gene>
    <name evidence="1" type="primary">tus</name>
    <name type="ordered locus">ECED1_1809</name>
</gene>
<proteinExistence type="inferred from homology"/>
<comment type="function">
    <text evidence="1">Trans-acting protein required for termination of DNA replication. Binds to DNA replication terminator sequences (terA to terF) to prevent the passage of replication forks. The termination efficiency will be affected by the affinity of this protein for the terminator sequence.</text>
</comment>
<comment type="subcellular location">
    <subcellularLocation>
        <location evidence="1">Cytoplasm</location>
    </subcellularLocation>
</comment>
<comment type="similarity">
    <text evidence="1">Belongs to the Tus family.</text>
</comment>
<protein>
    <recommendedName>
        <fullName evidence="1">DNA replication terminus site-binding protein</fullName>
        <shortName evidence="1">Ter-binding protein</shortName>
    </recommendedName>
</protein>
<name>TUS_ECO81</name>